<feature type="chain" id="PRO_0000372908" description="Matrix protein 1">
    <location>
        <begin position="1"/>
        <end position="252"/>
    </location>
</feature>
<feature type="region of interest" description="Membrane-binding" evidence="1">
    <location>
        <begin position="1"/>
        <end position="164"/>
    </location>
</feature>
<feature type="region of interest" description="RNP-binding" evidence="1">
    <location>
        <begin position="165"/>
        <end position="252"/>
    </location>
</feature>
<feature type="short sequence motif" description="Nuclear localization signal" evidence="1">
    <location>
        <begin position="101"/>
        <end position="105"/>
    </location>
</feature>
<comment type="function">
    <text evidence="1">Plays critical roles in virus replication, from virus entry and uncoating to assembly and budding of the virus particle. M1 binding to ribonucleocapsids (RNPs) in nucleus seems to inhibit viral transcription. Interaction of viral NEP with M1-RNP is thought to promote nuclear export of the complex, which is targeted to the virion assembly site at the apical plasma membrane in polarized epithelial cells. Interactions with NA and HA may bring M1, a non-raft-associated protein, into lipid rafts. Forms a continuous shell on the inner side of the lipid bilayer in virion, where it binds the RNP. During virus entry into cell, the M2 ion channel acidifies the internal virion core, inducing M1 dissociation from the RNP. M1-free RNPs are transported to the nucleus, where viral transcription and replication can take place.</text>
</comment>
<comment type="function">
    <text evidence="1">Determines the virion's shape: spherical or filamentous. Clinical isolates of influenza are characterized by the presence of significant proportion of filamentous virions, whereas after multiple passage on eggs or cell culture, virions have only spherical morphology. Filamentous virions are thought to be important to infect neighboring cells, and spherical virions more suited to spread through aerosol between hosts organisms.</text>
</comment>
<comment type="subunit">
    <text evidence="1">Homodimer and homomultimer. Interacts with NEP. Binds ribonucleocapsid by both interacting with genomic RNA and NP protein. May interact with HA and NA. Cannot bind NP without genomic RNA.</text>
</comment>
<comment type="subcellular location">
    <subcellularLocation>
        <location evidence="1">Virion membrane</location>
        <topology evidence="1">Peripheral membrane protein</topology>
        <orientation evidence="1">Cytoplasmic side</orientation>
    </subcellularLocation>
    <subcellularLocation>
        <location evidence="1">Host nucleus</location>
    </subcellularLocation>
</comment>
<comment type="alternative products">
    <event type="alternative splicing"/>
    <isoform>
        <id>A4K145-1</id>
        <name>M1</name>
        <sequence type="displayed"/>
    </isoform>
    <isoform>
        <id>A4K144-1</id>
        <name>M2</name>
        <sequence type="external"/>
    </isoform>
    <text>Only the first 9 residues are shared by the 2 isoforms.</text>
</comment>
<comment type="miscellaneous">
    <text evidence="1">Most abundant protein in virion. When expressed alone can form virus-like particles in transfected cells.</text>
</comment>
<comment type="similarity">
    <text evidence="1">Belongs to the influenza viruses Matrix protein M1 family.</text>
</comment>
<protein>
    <recommendedName>
        <fullName evidence="1">Matrix protein 1</fullName>
        <shortName evidence="1">M1</shortName>
    </recommendedName>
</protein>
<organism>
    <name type="scientific">Influenza A virus (strain A/Malaysia:Malaya/302/1954 H1N1)</name>
    <dbReference type="NCBI Taxonomy" id="425566"/>
    <lineage>
        <taxon>Viruses</taxon>
        <taxon>Riboviria</taxon>
        <taxon>Orthornavirae</taxon>
        <taxon>Negarnaviricota</taxon>
        <taxon>Polyploviricotina</taxon>
        <taxon>Insthoviricetes</taxon>
        <taxon>Articulavirales</taxon>
        <taxon>Orthomyxoviridae</taxon>
        <taxon>Alphainfluenzavirus</taxon>
        <taxon>Alphainfluenzavirus influenzae</taxon>
        <taxon>Influenza A virus</taxon>
    </lineage>
</organism>
<gene>
    <name evidence="1" type="primary">M</name>
</gene>
<proteinExistence type="inferred from homology"/>
<reference key="1">
    <citation type="submission" date="2007-03" db="EMBL/GenBank/DDBJ databases">
        <title>The NIAID influenza genome sequencing project.</title>
        <authorList>
            <person name="Ghedin E."/>
            <person name="Spiro D."/>
            <person name="Miller N."/>
            <person name="Zaborsky J."/>
            <person name="Feldblyum T."/>
            <person name="Subbu V."/>
            <person name="Shumway M."/>
            <person name="Sparenborg J."/>
            <person name="Groveman L."/>
            <person name="Halpin R."/>
            <person name="Sitz J."/>
            <person name="Koo H."/>
            <person name="Salzberg S.L."/>
            <person name="Webster R.G."/>
            <person name="Hoffmann E."/>
            <person name="Krauss S."/>
            <person name="Naeve C."/>
            <person name="Bao Y."/>
            <person name="Bolotov P."/>
            <person name="Dernovoy D."/>
            <person name="Kiryutin B."/>
            <person name="Lipman D.J."/>
            <person name="Tatusova T."/>
        </authorList>
    </citation>
    <scope>NUCLEOTIDE SEQUENCE [GENOMIC RNA]</scope>
</reference>
<reference key="2">
    <citation type="submission" date="2007-03" db="EMBL/GenBank/DDBJ databases">
        <authorList>
            <consortium name="The NIAID Influenza Genome Sequencing Consortium"/>
        </authorList>
    </citation>
    <scope>NUCLEOTIDE SEQUENCE [GENOMIC RNA]</scope>
</reference>
<accession>A4K145</accession>
<sequence length="252" mass="27863">MSLLTEVETYVLSIVPSGPLKAEIAQRLEDVFAGKNTDLEALMEWLKTRPILSPLTKGILGFVFTLTVPSERGLQRRRFVQNALNGNGDPNNMDRAVKLYRKLKREITFHGAKEIALSYSAGALASCMGLIYNRMGAVTTEVAFGLVCATCEQIADSQHRSHRQMVTTTNPLIRHENRMVLASTTAKAMEQMAGSSEQAAEAMEVASQTRQMVQAMRAIGTHPSSSAGLKNDLLENLQAYQKRMGVQMQRFK</sequence>
<dbReference type="EMBL" id="CY021054">
    <property type="protein sequence ID" value="ABO52281.1"/>
    <property type="molecule type" value="Viral_cRNA"/>
</dbReference>
<dbReference type="SMR" id="A4K145"/>
<dbReference type="Proteomes" id="UP000008219">
    <property type="component" value="Genome"/>
</dbReference>
<dbReference type="GO" id="GO:0042025">
    <property type="term" value="C:host cell nucleus"/>
    <property type="evidence" value="ECO:0007669"/>
    <property type="project" value="UniProtKB-SubCell"/>
</dbReference>
<dbReference type="GO" id="GO:0016020">
    <property type="term" value="C:membrane"/>
    <property type="evidence" value="ECO:0007669"/>
    <property type="project" value="UniProtKB-KW"/>
</dbReference>
<dbReference type="GO" id="GO:0055036">
    <property type="term" value="C:virion membrane"/>
    <property type="evidence" value="ECO:0007669"/>
    <property type="project" value="UniProtKB-SubCell"/>
</dbReference>
<dbReference type="GO" id="GO:0003723">
    <property type="term" value="F:RNA binding"/>
    <property type="evidence" value="ECO:0007669"/>
    <property type="project" value="UniProtKB-UniRule"/>
</dbReference>
<dbReference type="GO" id="GO:0039660">
    <property type="term" value="F:structural constituent of virion"/>
    <property type="evidence" value="ECO:0007669"/>
    <property type="project" value="UniProtKB-UniRule"/>
</dbReference>
<dbReference type="GO" id="GO:0046761">
    <property type="term" value="P:viral budding from plasma membrane"/>
    <property type="evidence" value="ECO:0007669"/>
    <property type="project" value="UniProtKB-UniRule"/>
</dbReference>
<dbReference type="FunFam" id="1.10.10.180:FF:000001">
    <property type="entry name" value="Matrix protein 1"/>
    <property type="match status" value="1"/>
</dbReference>
<dbReference type="FunFam" id="1.20.91.10:FF:000001">
    <property type="entry name" value="Matrix protein 1"/>
    <property type="match status" value="1"/>
</dbReference>
<dbReference type="Gene3D" id="1.10.10.180">
    <property type="match status" value="1"/>
</dbReference>
<dbReference type="Gene3D" id="1.20.91.10">
    <property type="match status" value="1"/>
</dbReference>
<dbReference type="HAMAP" id="MF_04068">
    <property type="entry name" value="INFV_M1"/>
    <property type="match status" value="1"/>
</dbReference>
<dbReference type="InterPro" id="IPR036039">
    <property type="entry name" value="Flu_matrix_M1"/>
</dbReference>
<dbReference type="InterPro" id="IPR013188">
    <property type="entry name" value="Flu_matrix_M1_C"/>
</dbReference>
<dbReference type="InterPro" id="IPR001561">
    <property type="entry name" value="Flu_matrix_M1_N"/>
</dbReference>
<dbReference type="InterPro" id="IPR015423">
    <property type="entry name" value="Flu_matrix_M1_N_sub1"/>
</dbReference>
<dbReference type="InterPro" id="IPR015799">
    <property type="entry name" value="Flu_matrix_M1_N_sub2"/>
</dbReference>
<dbReference type="InterPro" id="IPR037533">
    <property type="entry name" value="INFV_M1"/>
</dbReference>
<dbReference type="Pfam" id="PF00598">
    <property type="entry name" value="Flu_M1"/>
    <property type="match status" value="1"/>
</dbReference>
<dbReference type="Pfam" id="PF08289">
    <property type="entry name" value="Flu_M1_C"/>
    <property type="match status" value="1"/>
</dbReference>
<dbReference type="SMART" id="SM00759">
    <property type="entry name" value="Flu_M1_C"/>
    <property type="match status" value="1"/>
</dbReference>
<dbReference type="SUPFAM" id="SSF48145">
    <property type="entry name" value="Influenza virus matrix protein M1"/>
    <property type="match status" value="1"/>
</dbReference>
<name>M1_I54A2</name>
<evidence type="ECO:0000255" key="1">
    <source>
        <dbReference type="HAMAP-Rule" id="MF_04068"/>
    </source>
</evidence>
<keyword id="KW-0025">Alternative splicing</keyword>
<keyword id="KW-1048">Host nucleus</keyword>
<keyword id="KW-0472">Membrane</keyword>
<keyword id="KW-0694">RNA-binding</keyword>
<keyword id="KW-0468">Viral matrix protein</keyword>
<keyword id="KW-0946">Virion</keyword>
<organismHost>
    <name type="scientific">Aves</name>
    <dbReference type="NCBI Taxonomy" id="8782"/>
</organismHost>
<organismHost>
    <name type="scientific">Homo sapiens</name>
    <name type="common">Human</name>
    <dbReference type="NCBI Taxonomy" id="9606"/>
</organismHost>
<organismHost>
    <name type="scientific">Sus scrofa</name>
    <name type="common">Pig</name>
    <dbReference type="NCBI Taxonomy" id="9823"/>
</organismHost>